<dbReference type="EC" id="3.4.16.6"/>
<dbReference type="EMBL" id="BA000049">
    <property type="protein sequence ID" value="BAE56534.1"/>
    <property type="molecule type" value="Genomic_DNA"/>
</dbReference>
<dbReference type="RefSeq" id="XP_001818536.1">
    <property type="nucleotide sequence ID" value="XM_001818484.2"/>
</dbReference>
<dbReference type="SMR" id="Q2UPI1"/>
<dbReference type="STRING" id="510516.Q2UPI1"/>
<dbReference type="ESTHER" id="aspor-q2upi1">
    <property type="family name" value="Carboxypeptidase_S10"/>
</dbReference>
<dbReference type="MEROPS" id="S10.007"/>
<dbReference type="GlyCosmos" id="Q2UPI1">
    <property type="glycosylation" value="4 sites, No reported glycans"/>
</dbReference>
<dbReference type="EnsemblFungi" id="BAE56534">
    <property type="protein sequence ID" value="BAE56534"/>
    <property type="gene ID" value="AO090005001632"/>
</dbReference>
<dbReference type="GeneID" id="5990481"/>
<dbReference type="KEGG" id="aor:AO090005001632"/>
<dbReference type="VEuPathDB" id="FungiDB:AO090005001632"/>
<dbReference type="HOGENOM" id="CLU_008523_11_0_1"/>
<dbReference type="OMA" id="EMADQFV"/>
<dbReference type="OrthoDB" id="43059at5052"/>
<dbReference type="Proteomes" id="UP000006564">
    <property type="component" value="Chromosome 1"/>
</dbReference>
<dbReference type="GO" id="GO:0016020">
    <property type="term" value="C:membrane"/>
    <property type="evidence" value="ECO:0007669"/>
    <property type="project" value="UniProtKB-KW"/>
</dbReference>
<dbReference type="GO" id="GO:0005802">
    <property type="term" value="C:trans-Golgi network"/>
    <property type="evidence" value="ECO:0007669"/>
    <property type="project" value="TreeGrafter"/>
</dbReference>
<dbReference type="GO" id="GO:0004185">
    <property type="term" value="F:serine-type carboxypeptidase activity"/>
    <property type="evidence" value="ECO:0000314"/>
    <property type="project" value="AspGD"/>
</dbReference>
<dbReference type="GO" id="GO:0006915">
    <property type="term" value="P:apoptotic process"/>
    <property type="evidence" value="ECO:0007669"/>
    <property type="project" value="UniProtKB-KW"/>
</dbReference>
<dbReference type="GO" id="GO:0030448">
    <property type="term" value="P:hyphal growth"/>
    <property type="evidence" value="ECO:0000315"/>
    <property type="project" value="AspGD"/>
</dbReference>
<dbReference type="GO" id="GO:0075307">
    <property type="term" value="P:positive regulation of conidium formation"/>
    <property type="evidence" value="ECO:0000315"/>
    <property type="project" value="AspGD"/>
</dbReference>
<dbReference type="GO" id="GO:0006508">
    <property type="term" value="P:proteolysis"/>
    <property type="evidence" value="ECO:0007669"/>
    <property type="project" value="UniProtKB-KW"/>
</dbReference>
<dbReference type="FunFam" id="3.40.50.1820:FF:000121">
    <property type="entry name" value="Carboxypeptidase D"/>
    <property type="match status" value="1"/>
</dbReference>
<dbReference type="Gene3D" id="3.40.50.1820">
    <property type="entry name" value="alpha/beta hydrolase"/>
    <property type="match status" value="1"/>
</dbReference>
<dbReference type="InterPro" id="IPR029058">
    <property type="entry name" value="AB_hydrolase_fold"/>
</dbReference>
<dbReference type="InterPro" id="IPR001563">
    <property type="entry name" value="Peptidase_S10"/>
</dbReference>
<dbReference type="InterPro" id="IPR018202">
    <property type="entry name" value="Ser_caboxypep_ser_AS"/>
</dbReference>
<dbReference type="PANTHER" id="PTHR11802:SF190">
    <property type="entry name" value="PHEROMONE-PROCESSING CARBOXYPEPTIDASE KEX1"/>
    <property type="match status" value="1"/>
</dbReference>
<dbReference type="PANTHER" id="PTHR11802">
    <property type="entry name" value="SERINE PROTEASE FAMILY S10 SERINE CARBOXYPEPTIDASE"/>
    <property type="match status" value="1"/>
</dbReference>
<dbReference type="Pfam" id="PF00450">
    <property type="entry name" value="Peptidase_S10"/>
    <property type="match status" value="1"/>
</dbReference>
<dbReference type="PRINTS" id="PR00724">
    <property type="entry name" value="CRBOXYPTASEC"/>
</dbReference>
<dbReference type="SUPFAM" id="SSF53474">
    <property type="entry name" value="alpha/beta-Hydrolases"/>
    <property type="match status" value="1"/>
</dbReference>
<dbReference type="PROSITE" id="PS00131">
    <property type="entry name" value="CARBOXYPEPT_SER_SER"/>
    <property type="match status" value="1"/>
</dbReference>
<accession>Q2UPI1</accession>
<sequence>MFSSISRGFAKSETGDTFSFSFKSSWLLSLLVLWGPPLTTAKSAADYYVRSLPGAPDGPLLKMHAGHIEVDPQNNGNLFFWHYQNRHIANRQRTVIWLNGGPGCSSMDGALMEVGPYRLKDNLTLEYNEGSWDEFANLLFVDQPVGTGFSYVNTDSYLHELDEMSAHFIIFLDKFFELFPEYEGDDIYLAGESYAGQHIPYIAKAILDRNKNAVSPWNLRGLLIGNGWISPADQYPSYLTFAYEEGLIKEDSRTAKSLEVLQSVCQSKLETGGKDRIHIGDCETVLQELLSKTLDSDNKCYNMYDIRLRDTVPSCGMNWPQDLKDVKPYLRRADVVKALNINPEKKSGWEECSGAVSSSFLPQKSVPAVQLLPSLLESGISVLLFSGDKDLICNHVGTEQLINNMKWGGGVGFETSPGVWAPRHDWTFEGEPAGIYQHARNLTYVLLYNSSHMAPYDLPRQTRDMLDRFMKVDIASIGGSPADSRIDGEKLPQTSVGGHPNSTAAEEQEKERMKQAEWKAYAKSGEAVLVVVIIGVSVWGFFIWRSRQRHRRYQGLYHEDVSGASVLERFHNKRSGQDVEAGDFDESELDDLHSPDMAREHYTVGEDSDEDDVNRQHQRTTINPS</sequence>
<name>KEX1_ASPOR</name>
<feature type="signal peptide" evidence="2">
    <location>
        <begin position="1"/>
        <end position="41"/>
    </location>
</feature>
<feature type="chain" id="PRO_0000411905" description="Pheromone-processing carboxypeptidase kex1">
    <location>
        <begin position="42"/>
        <end position="625"/>
    </location>
</feature>
<feature type="topological domain" description="Lumenal" evidence="2">
    <location>
        <begin position="42"/>
        <end position="523"/>
    </location>
</feature>
<feature type="transmembrane region" description="Helical" evidence="2">
    <location>
        <begin position="524"/>
        <end position="544"/>
    </location>
</feature>
<feature type="topological domain" description="Cytoplasmic" evidence="2">
    <location>
        <begin position="545"/>
        <end position="625"/>
    </location>
</feature>
<feature type="region of interest" description="Disordered" evidence="4">
    <location>
        <begin position="480"/>
        <end position="511"/>
    </location>
</feature>
<feature type="region of interest" description="Disordered" evidence="4">
    <location>
        <begin position="574"/>
        <end position="625"/>
    </location>
</feature>
<feature type="compositionally biased region" description="Polar residues" evidence="4">
    <location>
        <begin position="492"/>
        <end position="505"/>
    </location>
</feature>
<feature type="compositionally biased region" description="Acidic residues" evidence="4">
    <location>
        <begin position="580"/>
        <end position="589"/>
    </location>
</feature>
<feature type="compositionally biased region" description="Basic and acidic residues" evidence="4">
    <location>
        <begin position="590"/>
        <end position="604"/>
    </location>
</feature>
<feature type="active site" evidence="3">
    <location>
        <position position="193"/>
    </location>
</feature>
<feature type="active site" evidence="3">
    <location>
        <position position="390"/>
    </location>
</feature>
<feature type="active site" evidence="3">
    <location>
        <position position="452"/>
    </location>
</feature>
<feature type="glycosylation site" description="N-linked (GlcNAc...) asparagine" evidence="2">
    <location>
        <position position="122"/>
    </location>
</feature>
<feature type="glycosylation site" description="N-linked (GlcNAc...) asparagine" evidence="2">
    <location>
        <position position="441"/>
    </location>
</feature>
<feature type="glycosylation site" description="N-linked (GlcNAc...) asparagine" evidence="2">
    <location>
        <position position="449"/>
    </location>
</feature>
<feature type="glycosylation site" description="N-linked (GlcNAc...) asparagine" evidence="2">
    <location>
        <position position="501"/>
    </location>
</feature>
<evidence type="ECO:0000250" key="1"/>
<evidence type="ECO:0000255" key="2"/>
<evidence type="ECO:0000255" key="3">
    <source>
        <dbReference type="PROSITE-ProRule" id="PRU10074"/>
    </source>
</evidence>
<evidence type="ECO:0000256" key="4">
    <source>
        <dbReference type="SAM" id="MobiDB-lite"/>
    </source>
</evidence>
<evidence type="ECO:0000305" key="5"/>
<keyword id="KW-0053">Apoptosis</keyword>
<keyword id="KW-0121">Carboxypeptidase</keyword>
<keyword id="KW-0325">Glycoprotein</keyword>
<keyword id="KW-0333">Golgi apparatus</keyword>
<keyword id="KW-0378">Hydrolase</keyword>
<keyword id="KW-0472">Membrane</keyword>
<keyword id="KW-0645">Protease</keyword>
<keyword id="KW-1185">Reference proteome</keyword>
<keyword id="KW-0732">Signal</keyword>
<keyword id="KW-0812">Transmembrane</keyword>
<keyword id="KW-1133">Transmembrane helix</keyword>
<comment type="function">
    <text evidence="1">Protease with a carboxypeptidase B-like function involved in the C-terminal processing of the lysine and arginine residues from protein precursors. Promotes cell fusion and is involved in the programmed cell death (By similarity).</text>
</comment>
<comment type="catalytic activity">
    <reaction>
        <text>Preferential release of a C-terminal arginine or lysine residue.</text>
        <dbReference type="EC" id="3.4.16.6"/>
    </reaction>
</comment>
<comment type="subcellular location">
    <subcellularLocation>
        <location evidence="1">Golgi apparatus</location>
        <location evidence="1">trans-Golgi network membrane</location>
        <topology evidence="1">Single-pass type I membrane protein</topology>
    </subcellularLocation>
</comment>
<comment type="similarity">
    <text evidence="5">Belongs to the peptidase S10 family.</text>
</comment>
<reference key="1">
    <citation type="journal article" date="2005" name="Nature">
        <title>Genome sequencing and analysis of Aspergillus oryzae.</title>
        <authorList>
            <person name="Machida M."/>
            <person name="Asai K."/>
            <person name="Sano M."/>
            <person name="Tanaka T."/>
            <person name="Kumagai T."/>
            <person name="Terai G."/>
            <person name="Kusumoto K."/>
            <person name="Arima T."/>
            <person name="Akita O."/>
            <person name="Kashiwagi Y."/>
            <person name="Abe K."/>
            <person name="Gomi K."/>
            <person name="Horiuchi H."/>
            <person name="Kitamoto K."/>
            <person name="Kobayashi T."/>
            <person name="Takeuchi M."/>
            <person name="Denning D.W."/>
            <person name="Galagan J.E."/>
            <person name="Nierman W.C."/>
            <person name="Yu J."/>
            <person name="Archer D.B."/>
            <person name="Bennett J.W."/>
            <person name="Bhatnagar D."/>
            <person name="Cleveland T.E."/>
            <person name="Fedorova N.D."/>
            <person name="Gotoh O."/>
            <person name="Horikawa H."/>
            <person name="Hosoyama A."/>
            <person name="Ichinomiya M."/>
            <person name="Igarashi R."/>
            <person name="Iwashita K."/>
            <person name="Juvvadi P.R."/>
            <person name="Kato M."/>
            <person name="Kato Y."/>
            <person name="Kin T."/>
            <person name="Kokubun A."/>
            <person name="Maeda H."/>
            <person name="Maeyama N."/>
            <person name="Maruyama J."/>
            <person name="Nagasaki H."/>
            <person name="Nakajima T."/>
            <person name="Oda K."/>
            <person name="Okada K."/>
            <person name="Paulsen I."/>
            <person name="Sakamoto K."/>
            <person name="Sawano T."/>
            <person name="Takahashi M."/>
            <person name="Takase K."/>
            <person name="Terabayashi Y."/>
            <person name="Wortman J.R."/>
            <person name="Yamada O."/>
            <person name="Yamagata Y."/>
            <person name="Anazawa H."/>
            <person name="Hata Y."/>
            <person name="Koide Y."/>
            <person name="Komori T."/>
            <person name="Koyama Y."/>
            <person name="Minetoki T."/>
            <person name="Suharnan S."/>
            <person name="Tanaka A."/>
            <person name="Isono K."/>
            <person name="Kuhara S."/>
            <person name="Ogasawara N."/>
            <person name="Kikuchi H."/>
        </authorList>
    </citation>
    <scope>NUCLEOTIDE SEQUENCE [LARGE SCALE GENOMIC DNA]</scope>
    <source>
        <strain>ATCC 42149 / RIB 40</strain>
    </source>
</reference>
<organism>
    <name type="scientific">Aspergillus oryzae (strain ATCC 42149 / RIB 40)</name>
    <name type="common">Yellow koji mold</name>
    <dbReference type="NCBI Taxonomy" id="510516"/>
    <lineage>
        <taxon>Eukaryota</taxon>
        <taxon>Fungi</taxon>
        <taxon>Dikarya</taxon>
        <taxon>Ascomycota</taxon>
        <taxon>Pezizomycotina</taxon>
        <taxon>Eurotiomycetes</taxon>
        <taxon>Eurotiomycetidae</taxon>
        <taxon>Eurotiales</taxon>
        <taxon>Aspergillaceae</taxon>
        <taxon>Aspergillus</taxon>
        <taxon>Aspergillus subgen. Circumdati</taxon>
    </lineage>
</organism>
<gene>
    <name type="primary">kex1</name>
    <name type="ORF">AO090005001632</name>
</gene>
<proteinExistence type="inferred from homology"/>
<protein>
    <recommendedName>
        <fullName>Pheromone-processing carboxypeptidase kex1</fullName>
        <ecNumber>3.4.16.6</ecNumber>
    </recommendedName>
    <alternativeName>
        <fullName>Carboxypeptidase D</fullName>
    </alternativeName>
</protein>